<dbReference type="EC" id="3.2.2.22" evidence="1"/>
<dbReference type="PIR" id="S17686">
    <property type="entry name" value="S17686"/>
</dbReference>
<dbReference type="GO" id="GO:0030598">
    <property type="term" value="F:rRNA N-glycosylase activity"/>
    <property type="evidence" value="ECO:0007669"/>
    <property type="project" value="UniProtKB-EC"/>
</dbReference>
<dbReference type="GO" id="GO:0090729">
    <property type="term" value="F:toxin activity"/>
    <property type="evidence" value="ECO:0007669"/>
    <property type="project" value="UniProtKB-KW"/>
</dbReference>
<dbReference type="GO" id="GO:0006952">
    <property type="term" value="P:defense response"/>
    <property type="evidence" value="ECO:0007669"/>
    <property type="project" value="UniProtKB-KW"/>
</dbReference>
<dbReference type="GO" id="GO:0017148">
    <property type="term" value="P:negative regulation of translation"/>
    <property type="evidence" value="ECO:0007669"/>
    <property type="project" value="UniProtKB-KW"/>
</dbReference>
<dbReference type="GO" id="GO:0050688">
    <property type="term" value="P:regulation of defense response to virus"/>
    <property type="evidence" value="ECO:0007669"/>
    <property type="project" value="UniProtKB-KW"/>
</dbReference>
<dbReference type="Gene3D" id="3.40.420.10">
    <property type="entry name" value="Ricin (A subunit), domain 1"/>
    <property type="match status" value="1"/>
</dbReference>
<dbReference type="InterPro" id="IPR036041">
    <property type="entry name" value="Ribosome-inact_prot_sf"/>
</dbReference>
<dbReference type="InterPro" id="IPR016138">
    <property type="entry name" value="Ribosome_inactivat_prot_sub1"/>
</dbReference>
<dbReference type="SUPFAM" id="SSF56371">
    <property type="entry name" value="Ribosome inactivating proteins (RIP)"/>
    <property type="match status" value="1"/>
</dbReference>
<reference key="1">
    <citation type="journal article" date="1991" name="FEBS Lett.">
        <title>A new class of anti-HIV agents: GAP31, DAPs 30 and 32.</title>
        <authorList>
            <person name="Lee-Huang S."/>
            <person name="Kung H.-F."/>
            <person name="Huang P.L."/>
            <person name="Huang P.L."/>
            <person name="Li B.-Q."/>
            <person name="Huang P."/>
            <person name="Huang H.I."/>
            <person name="Chen H.-C."/>
        </authorList>
    </citation>
    <scope>PROTEIN SEQUENCE</scope>
    <scope>FUNCTION</scope>
    <scope>MISCELLANEOUS</scope>
    <source>
        <tissue evidence="3">Leaf</tissue>
    </source>
</reference>
<keyword id="KW-0930">Antiviral protein</keyword>
<keyword id="KW-0903">Direct protein sequencing</keyword>
<keyword id="KW-0378">Hydrolase</keyword>
<keyword id="KW-0582">Pharmaceutical</keyword>
<keyword id="KW-0611">Plant defense</keyword>
<keyword id="KW-0652">Protein synthesis inhibitor</keyword>
<keyword id="KW-0800">Toxin</keyword>
<evidence type="ECO:0000250" key="1">
    <source>
        <dbReference type="UniProtKB" id="P84853"/>
    </source>
</evidence>
<evidence type="ECO:0000269" key="2">
    <source>
    </source>
</evidence>
<evidence type="ECO:0000303" key="3">
    <source>
    </source>
</evidence>
<evidence type="ECO:0000305" key="4"/>
<feature type="chain" id="PRO_0000221419" description="Ribosome-inactivating protein dianthin-32">
    <location>
        <begin position="1"/>
        <end position="60" status="greater than"/>
    </location>
</feature>
<feature type="non-terminal residue">
    <location>
        <position position="60"/>
    </location>
</feature>
<comment type="function">
    <text evidence="2">Single-chain ribosome-inactivating protein.</text>
</comment>
<comment type="catalytic activity">
    <reaction evidence="1">
        <text>Endohydrolysis of the N-glycosidic bond at one specific adenosine on the 28S rRNA.</text>
        <dbReference type="EC" id="3.2.2.22"/>
    </reaction>
</comment>
<comment type="miscellaneous">
    <text evidence="2">Possesses high antiviral potency and low toxicity to normal cells in culture and to intact animals. Capable of inhibiting HIV-1 infection and replication.</text>
</comment>
<comment type="similarity">
    <text evidence="4">Belongs to the ribosome-inactivating protein family. Type 1 RIP subfamily.</text>
</comment>
<organism>
    <name type="scientific">Dianthus caryophyllus</name>
    <name type="common">Carnation</name>
    <name type="synonym">Clove pink</name>
    <dbReference type="NCBI Taxonomy" id="3570"/>
    <lineage>
        <taxon>Eukaryota</taxon>
        <taxon>Viridiplantae</taxon>
        <taxon>Streptophyta</taxon>
        <taxon>Embryophyta</taxon>
        <taxon>Tracheophyta</taxon>
        <taxon>Spermatophyta</taxon>
        <taxon>Magnoliopsida</taxon>
        <taxon>eudicotyledons</taxon>
        <taxon>Gunneridae</taxon>
        <taxon>Pentapetalae</taxon>
        <taxon>Caryophyllales</taxon>
        <taxon>Caryophyllaceae</taxon>
        <taxon>Caryophylleae</taxon>
        <taxon>Dianthus</taxon>
    </lineage>
</organism>
<protein>
    <recommendedName>
        <fullName evidence="4">Ribosome-inactivating protein dianthin-32</fullName>
        <shortName evidence="3">RIP DAP-32</shortName>
        <ecNumber evidence="1">3.2.2.22</ecNumber>
    </recommendedName>
    <alternativeName>
        <fullName evidence="3">Antiviral protein DAP-32</fullName>
    </alternativeName>
    <alternativeName>
        <fullName evidence="4">rRNA N-glycosidase</fullName>
    </alternativeName>
</protein>
<sequence length="60" mass="6602">AVKTITLNLVSPSANRYATFLTEIRDNVRXRSLDYSHSGIDVIGAPSSRDSXLNINFQSP</sequence>
<name>RIP2_DIACA</name>
<proteinExistence type="evidence at protein level"/>
<accession>P24477</accession>